<dbReference type="EMBL" id="AK017911">
    <property type="protein sequence ID" value="BAB30999.1"/>
    <property type="molecule type" value="mRNA"/>
</dbReference>
<dbReference type="EMBL" id="BC024587">
    <property type="protein sequence ID" value="AAH24587.1"/>
    <property type="molecule type" value="mRNA"/>
</dbReference>
<dbReference type="CCDS" id="CCDS15517.1"/>
<dbReference type="RefSeq" id="NP_083360.2">
    <property type="nucleotide sequence ID" value="NM_029084.3"/>
</dbReference>
<dbReference type="SMR" id="Q9D3G2"/>
<dbReference type="BioGRID" id="216992">
    <property type="interactions" value="1"/>
</dbReference>
<dbReference type="FunCoup" id="Q9D3G2">
    <property type="interactions" value="3"/>
</dbReference>
<dbReference type="STRING" id="10090.ENSMUSP00000067527"/>
<dbReference type="GlyCosmos" id="Q9D3G2">
    <property type="glycosylation" value="2 sites, No reported glycans"/>
</dbReference>
<dbReference type="GlyGen" id="Q9D3G2">
    <property type="glycosylation" value="2 sites"/>
</dbReference>
<dbReference type="PaxDb" id="10090-ENSMUSP00000067527"/>
<dbReference type="DNASU" id="74748"/>
<dbReference type="GeneID" id="74748"/>
<dbReference type="KEGG" id="mmu:74748"/>
<dbReference type="AGR" id="MGI:1921998"/>
<dbReference type="CTD" id="56833"/>
<dbReference type="MGI" id="MGI:1921998">
    <property type="gene designation" value="Slamf8"/>
</dbReference>
<dbReference type="eggNOG" id="ENOG502S183">
    <property type="taxonomic scope" value="Eukaryota"/>
</dbReference>
<dbReference type="InParanoid" id="Q9D3G2"/>
<dbReference type="OrthoDB" id="8963224at2759"/>
<dbReference type="PhylomeDB" id="Q9D3G2"/>
<dbReference type="BioGRID-ORCS" id="74748">
    <property type="hits" value="3 hits in 79 CRISPR screens"/>
</dbReference>
<dbReference type="PRO" id="PR:Q9D3G2"/>
<dbReference type="Proteomes" id="UP000000589">
    <property type="component" value="Unplaced"/>
</dbReference>
<dbReference type="RNAct" id="Q9D3G2">
    <property type="molecule type" value="protein"/>
</dbReference>
<dbReference type="GO" id="GO:0016020">
    <property type="term" value="C:membrane"/>
    <property type="evidence" value="ECO:0007669"/>
    <property type="project" value="UniProtKB-SubCell"/>
</dbReference>
<dbReference type="GO" id="GO:0042802">
    <property type="term" value="F:identical protein binding"/>
    <property type="evidence" value="ECO:0000314"/>
    <property type="project" value="MGI"/>
</dbReference>
<dbReference type="GO" id="GO:0038023">
    <property type="term" value="F:signaling receptor activity"/>
    <property type="evidence" value="ECO:0000314"/>
    <property type="project" value="MGI"/>
</dbReference>
<dbReference type="GO" id="GO:0002336">
    <property type="term" value="P:B-1 B cell lineage commitment"/>
    <property type="evidence" value="ECO:0000314"/>
    <property type="project" value="UniProtKB"/>
</dbReference>
<dbReference type="GO" id="GO:0071466">
    <property type="term" value="P:cellular response to xenobiotic stimulus"/>
    <property type="evidence" value="ECO:0000315"/>
    <property type="project" value="MGI"/>
</dbReference>
<dbReference type="GO" id="GO:0042742">
    <property type="term" value="P:defense response to bacterium"/>
    <property type="evidence" value="ECO:0000315"/>
    <property type="project" value="MGI"/>
</dbReference>
<dbReference type="GO" id="GO:0002232">
    <property type="term" value="P:leukocyte chemotaxis involved in inflammatory response"/>
    <property type="evidence" value="ECO:0000315"/>
    <property type="project" value="MGI"/>
</dbReference>
<dbReference type="GO" id="GO:2000509">
    <property type="term" value="P:negative regulation of dendritic cell chemotaxis"/>
    <property type="evidence" value="ECO:0000315"/>
    <property type="project" value="MGI"/>
</dbReference>
<dbReference type="GO" id="GO:0010760">
    <property type="term" value="P:negative regulation of macrophage chemotaxis"/>
    <property type="evidence" value="ECO:0000315"/>
    <property type="project" value="MGI"/>
</dbReference>
<dbReference type="GO" id="GO:0090027">
    <property type="term" value="P:negative regulation of monocyte chemotaxis"/>
    <property type="evidence" value="ECO:0000315"/>
    <property type="project" value="MGI"/>
</dbReference>
<dbReference type="GO" id="GO:1902623">
    <property type="term" value="P:negative regulation of neutrophil migration"/>
    <property type="evidence" value="ECO:0000315"/>
    <property type="project" value="MGI"/>
</dbReference>
<dbReference type="GO" id="GO:0060266">
    <property type="term" value="P:negative regulation of respiratory burst involved in inflammatory response"/>
    <property type="evidence" value="ECO:0000315"/>
    <property type="project" value="MGI"/>
</dbReference>
<dbReference type="GO" id="GO:0090383">
    <property type="term" value="P:phagosome acidification"/>
    <property type="evidence" value="ECO:0000315"/>
    <property type="project" value="MGI"/>
</dbReference>
<dbReference type="GO" id="GO:0045577">
    <property type="term" value="P:regulation of B cell differentiation"/>
    <property type="evidence" value="ECO:0000314"/>
    <property type="project" value="UniProtKB"/>
</dbReference>
<dbReference type="Gene3D" id="2.60.40.10">
    <property type="entry name" value="Immunoglobulins"/>
    <property type="match status" value="2"/>
</dbReference>
<dbReference type="InterPro" id="IPR015631">
    <property type="entry name" value="CD2/SLAM_rcpt"/>
</dbReference>
<dbReference type="InterPro" id="IPR007110">
    <property type="entry name" value="Ig-like_dom"/>
</dbReference>
<dbReference type="InterPro" id="IPR036179">
    <property type="entry name" value="Ig-like_dom_sf"/>
</dbReference>
<dbReference type="InterPro" id="IPR013783">
    <property type="entry name" value="Ig-like_fold"/>
</dbReference>
<dbReference type="PANTHER" id="PTHR12080">
    <property type="entry name" value="SIGNALING LYMPHOCYTIC ACTIVATION MOLECULE"/>
    <property type="match status" value="1"/>
</dbReference>
<dbReference type="PANTHER" id="PTHR12080:SF92">
    <property type="entry name" value="SLAM FAMILY MEMBER 8"/>
    <property type="match status" value="1"/>
</dbReference>
<dbReference type="SUPFAM" id="SSF48726">
    <property type="entry name" value="Immunoglobulin"/>
    <property type="match status" value="2"/>
</dbReference>
<dbReference type="PROSITE" id="PS50835">
    <property type="entry name" value="IG_LIKE"/>
    <property type="match status" value="1"/>
</dbReference>
<organism>
    <name type="scientific">Mus musculus</name>
    <name type="common">Mouse</name>
    <dbReference type="NCBI Taxonomy" id="10090"/>
    <lineage>
        <taxon>Eukaryota</taxon>
        <taxon>Metazoa</taxon>
        <taxon>Chordata</taxon>
        <taxon>Craniata</taxon>
        <taxon>Vertebrata</taxon>
        <taxon>Euteleostomi</taxon>
        <taxon>Mammalia</taxon>
        <taxon>Eutheria</taxon>
        <taxon>Euarchontoglires</taxon>
        <taxon>Glires</taxon>
        <taxon>Rodentia</taxon>
        <taxon>Myomorpha</taxon>
        <taxon>Muroidea</taxon>
        <taxon>Muridae</taxon>
        <taxon>Murinae</taxon>
        <taxon>Mus</taxon>
        <taxon>Mus</taxon>
    </lineage>
</organism>
<comment type="function">
    <text evidence="4">May play a role in B-lineage commitment and/or modulation of signaling through the B-cell receptor.</text>
</comment>
<comment type="subcellular location">
    <subcellularLocation>
        <location>Membrane</location>
        <topology>Single-pass type I membrane protein</topology>
    </subcellularLocation>
</comment>
<feature type="signal peptide" evidence="1">
    <location>
        <begin position="1"/>
        <end position="20"/>
    </location>
</feature>
<feature type="chain" id="PRO_0000014966" description="SLAM family member 8">
    <location>
        <begin position="21"/>
        <end position="278"/>
    </location>
</feature>
<feature type="topological domain" description="Extracellular" evidence="2">
    <location>
        <begin position="21"/>
        <end position="231"/>
    </location>
</feature>
<feature type="transmembrane region" description="Helical" evidence="2">
    <location>
        <begin position="232"/>
        <end position="252"/>
    </location>
</feature>
<feature type="topological domain" description="Cytoplasmic" evidence="2">
    <location>
        <begin position="253"/>
        <end position="278"/>
    </location>
</feature>
<feature type="domain" description="Ig-like C2-type">
    <location>
        <begin position="126"/>
        <end position="213"/>
    </location>
</feature>
<feature type="glycosylation site" description="N-linked (GlcNAc...) asparagine" evidence="2">
    <location>
        <position position="83"/>
    </location>
</feature>
<feature type="glycosylation site" description="N-linked (GlcNAc...) asparagine" evidence="2">
    <location>
        <position position="154"/>
    </location>
</feature>
<feature type="disulfide bond" evidence="3">
    <location>
        <begin position="150"/>
        <end position="199"/>
    </location>
</feature>
<feature type="sequence conflict" description="In Ref. 2; BAB30999." evidence="5" ref="2">
    <original>G</original>
    <variation>R</variation>
    <location>
        <position position="107"/>
    </location>
</feature>
<feature type="sequence conflict" description="In Ref. 2; BAB30999." evidence="5" ref="2">
    <original>W</original>
    <variation>R</variation>
    <location>
        <position position="164"/>
    </location>
</feature>
<feature type="sequence conflict" description="In Ref. 2; BAB30999." evidence="5" ref="2">
    <original>R</original>
    <variation>H</variation>
    <location>
        <position position="175"/>
    </location>
</feature>
<proteinExistence type="evidence at transcript level"/>
<gene>
    <name type="primary">Slamf8</name>
    <name type="synonym">Blame</name>
</gene>
<protein>
    <recommendedName>
        <fullName>SLAM family member 8</fullName>
    </recommendedName>
    <alternativeName>
        <fullName>B-lymphocyte activator macrophage expressed</fullName>
    </alternativeName>
    <cdAntigenName>CD353</cdAntigenName>
</protein>
<sequence length="278" mass="30646">MWSLWSLLLFEALLPVVVVSVQVLSKVGDSELLVAECPPGFQVREAIWRSLWPSEELLATFFRGSLETLYHSRFLGRVQLYDNLSLELGPLKPGDSGNFSVLMVDTGGQTWTQTLYLKVYDAVPKPEVQVFTAAAEETQPLNTCQVFLSCWAPNISDITYSWRWEGTVDFNGEVRSHFSNGQVLSVSLGLGDKDVAFTCIASNPVSWDMTTVTPWESCHHEAASGKASYKDVLLVVVPITLFLILAGLFGAWHHGLCSGKKKDACTDGVLPETENALV</sequence>
<name>SLAF8_MOUSE</name>
<evidence type="ECO:0000250" key="1"/>
<evidence type="ECO:0000255" key="2"/>
<evidence type="ECO:0000255" key="3">
    <source>
        <dbReference type="PROSITE-ProRule" id="PRU00114"/>
    </source>
</evidence>
<evidence type="ECO:0000269" key="4">
    <source>
    </source>
</evidence>
<evidence type="ECO:0000305" key="5"/>
<keyword id="KW-1015">Disulfide bond</keyword>
<keyword id="KW-0325">Glycoprotein</keyword>
<keyword id="KW-0393">Immunoglobulin domain</keyword>
<keyword id="KW-0472">Membrane</keyword>
<keyword id="KW-1185">Reference proteome</keyword>
<keyword id="KW-0732">Signal</keyword>
<keyword id="KW-0812">Transmembrane</keyword>
<keyword id="KW-1133">Transmembrane helix</keyword>
<reference key="1">
    <citation type="journal article" date="2001" name="J. Immunol.">
        <title>Cloning, expression, and function of BLAME, a novel member of the CD2 family.</title>
        <authorList>
            <person name="Kingsbury G.A."/>
            <person name="Feeney L.A."/>
            <person name="Nong Y."/>
            <person name="Calandra S.A."/>
            <person name="Murphy C.J."/>
            <person name="Corcoran J.M."/>
            <person name="Wang Y."/>
            <person name="Prabhu Das M.R."/>
            <person name="Busfield S.J."/>
            <person name="Fraser C.C."/>
            <person name="Villeval J.-L."/>
        </authorList>
    </citation>
    <scope>NUCLEOTIDE SEQUENCE [MRNA]</scope>
    <scope>FUNCTION</scope>
</reference>
<reference key="2">
    <citation type="journal article" date="2005" name="Science">
        <title>The transcriptional landscape of the mammalian genome.</title>
        <authorList>
            <person name="Carninci P."/>
            <person name="Kasukawa T."/>
            <person name="Katayama S."/>
            <person name="Gough J."/>
            <person name="Frith M.C."/>
            <person name="Maeda N."/>
            <person name="Oyama R."/>
            <person name="Ravasi T."/>
            <person name="Lenhard B."/>
            <person name="Wells C."/>
            <person name="Kodzius R."/>
            <person name="Shimokawa K."/>
            <person name="Bajic V.B."/>
            <person name="Brenner S.E."/>
            <person name="Batalov S."/>
            <person name="Forrest A.R."/>
            <person name="Zavolan M."/>
            <person name="Davis M.J."/>
            <person name="Wilming L.G."/>
            <person name="Aidinis V."/>
            <person name="Allen J.E."/>
            <person name="Ambesi-Impiombato A."/>
            <person name="Apweiler R."/>
            <person name="Aturaliya R.N."/>
            <person name="Bailey T.L."/>
            <person name="Bansal M."/>
            <person name="Baxter L."/>
            <person name="Beisel K.W."/>
            <person name="Bersano T."/>
            <person name="Bono H."/>
            <person name="Chalk A.M."/>
            <person name="Chiu K.P."/>
            <person name="Choudhary V."/>
            <person name="Christoffels A."/>
            <person name="Clutterbuck D.R."/>
            <person name="Crowe M.L."/>
            <person name="Dalla E."/>
            <person name="Dalrymple B.P."/>
            <person name="de Bono B."/>
            <person name="Della Gatta G."/>
            <person name="di Bernardo D."/>
            <person name="Down T."/>
            <person name="Engstrom P."/>
            <person name="Fagiolini M."/>
            <person name="Faulkner G."/>
            <person name="Fletcher C.F."/>
            <person name="Fukushima T."/>
            <person name="Furuno M."/>
            <person name="Futaki S."/>
            <person name="Gariboldi M."/>
            <person name="Georgii-Hemming P."/>
            <person name="Gingeras T.R."/>
            <person name="Gojobori T."/>
            <person name="Green R.E."/>
            <person name="Gustincich S."/>
            <person name="Harbers M."/>
            <person name="Hayashi Y."/>
            <person name="Hensch T.K."/>
            <person name="Hirokawa N."/>
            <person name="Hill D."/>
            <person name="Huminiecki L."/>
            <person name="Iacono M."/>
            <person name="Ikeo K."/>
            <person name="Iwama A."/>
            <person name="Ishikawa T."/>
            <person name="Jakt M."/>
            <person name="Kanapin A."/>
            <person name="Katoh M."/>
            <person name="Kawasawa Y."/>
            <person name="Kelso J."/>
            <person name="Kitamura H."/>
            <person name="Kitano H."/>
            <person name="Kollias G."/>
            <person name="Krishnan S.P."/>
            <person name="Kruger A."/>
            <person name="Kummerfeld S.K."/>
            <person name="Kurochkin I.V."/>
            <person name="Lareau L.F."/>
            <person name="Lazarevic D."/>
            <person name="Lipovich L."/>
            <person name="Liu J."/>
            <person name="Liuni S."/>
            <person name="McWilliam S."/>
            <person name="Madan Babu M."/>
            <person name="Madera M."/>
            <person name="Marchionni L."/>
            <person name="Matsuda H."/>
            <person name="Matsuzawa S."/>
            <person name="Miki H."/>
            <person name="Mignone F."/>
            <person name="Miyake S."/>
            <person name="Morris K."/>
            <person name="Mottagui-Tabar S."/>
            <person name="Mulder N."/>
            <person name="Nakano N."/>
            <person name="Nakauchi H."/>
            <person name="Ng P."/>
            <person name="Nilsson R."/>
            <person name="Nishiguchi S."/>
            <person name="Nishikawa S."/>
            <person name="Nori F."/>
            <person name="Ohara O."/>
            <person name="Okazaki Y."/>
            <person name="Orlando V."/>
            <person name="Pang K.C."/>
            <person name="Pavan W.J."/>
            <person name="Pavesi G."/>
            <person name="Pesole G."/>
            <person name="Petrovsky N."/>
            <person name="Piazza S."/>
            <person name="Reed J."/>
            <person name="Reid J.F."/>
            <person name="Ring B.Z."/>
            <person name="Ringwald M."/>
            <person name="Rost B."/>
            <person name="Ruan Y."/>
            <person name="Salzberg S.L."/>
            <person name="Sandelin A."/>
            <person name="Schneider C."/>
            <person name="Schoenbach C."/>
            <person name="Sekiguchi K."/>
            <person name="Semple C.A."/>
            <person name="Seno S."/>
            <person name="Sessa L."/>
            <person name="Sheng Y."/>
            <person name="Shibata Y."/>
            <person name="Shimada H."/>
            <person name="Shimada K."/>
            <person name="Silva D."/>
            <person name="Sinclair B."/>
            <person name="Sperling S."/>
            <person name="Stupka E."/>
            <person name="Sugiura K."/>
            <person name="Sultana R."/>
            <person name="Takenaka Y."/>
            <person name="Taki K."/>
            <person name="Tammoja K."/>
            <person name="Tan S.L."/>
            <person name="Tang S."/>
            <person name="Taylor M.S."/>
            <person name="Tegner J."/>
            <person name="Teichmann S.A."/>
            <person name="Ueda H.R."/>
            <person name="van Nimwegen E."/>
            <person name="Verardo R."/>
            <person name="Wei C.L."/>
            <person name="Yagi K."/>
            <person name="Yamanishi H."/>
            <person name="Zabarovsky E."/>
            <person name="Zhu S."/>
            <person name="Zimmer A."/>
            <person name="Hide W."/>
            <person name="Bult C."/>
            <person name="Grimmond S.M."/>
            <person name="Teasdale R.D."/>
            <person name="Liu E.T."/>
            <person name="Brusic V."/>
            <person name="Quackenbush J."/>
            <person name="Wahlestedt C."/>
            <person name="Mattick J.S."/>
            <person name="Hume D.A."/>
            <person name="Kai C."/>
            <person name="Sasaki D."/>
            <person name="Tomaru Y."/>
            <person name="Fukuda S."/>
            <person name="Kanamori-Katayama M."/>
            <person name="Suzuki M."/>
            <person name="Aoki J."/>
            <person name="Arakawa T."/>
            <person name="Iida J."/>
            <person name="Imamura K."/>
            <person name="Itoh M."/>
            <person name="Kato T."/>
            <person name="Kawaji H."/>
            <person name="Kawagashira N."/>
            <person name="Kawashima T."/>
            <person name="Kojima M."/>
            <person name="Kondo S."/>
            <person name="Konno H."/>
            <person name="Nakano K."/>
            <person name="Ninomiya N."/>
            <person name="Nishio T."/>
            <person name="Okada M."/>
            <person name="Plessy C."/>
            <person name="Shibata K."/>
            <person name="Shiraki T."/>
            <person name="Suzuki S."/>
            <person name="Tagami M."/>
            <person name="Waki K."/>
            <person name="Watahiki A."/>
            <person name="Okamura-Oho Y."/>
            <person name="Suzuki H."/>
            <person name="Kawai J."/>
            <person name="Hayashizaki Y."/>
        </authorList>
    </citation>
    <scope>NUCLEOTIDE SEQUENCE [LARGE SCALE MRNA]</scope>
    <source>
        <strain>C57BL/6J</strain>
        <tissue>Thymus</tissue>
    </source>
</reference>
<reference key="3">
    <citation type="journal article" date="2004" name="Genome Res.">
        <title>The status, quality, and expansion of the NIH full-length cDNA project: the Mammalian Gene Collection (MGC).</title>
        <authorList>
            <consortium name="The MGC Project Team"/>
        </authorList>
    </citation>
    <scope>NUCLEOTIDE SEQUENCE [LARGE SCALE MRNA]</scope>
    <source>
        <strain>Czech II</strain>
        <tissue>Mammary tumor</tissue>
    </source>
</reference>
<accession>Q9D3G2</accession>
<accession>Q8R3T7</accession>